<feature type="chain" id="PRO_0000204200" description="Regulator of G-protein signaling 8">
    <location>
        <begin position="1"/>
        <end position="180"/>
    </location>
</feature>
<feature type="domain" description="RGS" evidence="2">
    <location>
        <begin position="56"/>
        <end position="171"/>
    </location>
</feature>
<feature type="modified residue" description="Phosphoserine" evidence="1">
    <location>
        <position position="26"/>
    </location>
</feature>
<evidence type="ECO:0000250" key="1">
    <source>
        <dbReference type="UniProtKB" id="P49804"/>
    </source>
</evidence>
<evidence type="ECO:0000255" key="2">
    <source>
        <dbReference type="PROSITE-ProRule" id="PRU00171"/>
    </source>
</evidence>
<name>RGS8_MOUSE</name>
<proteinExistence type="evidence at protein level"/>
<gene>
    <name type="primary">Rgs8</name>
</gene>
<organism>
    <name type="scientific">Mus musculus</name>
    <name type="common">Mouse</name>
    <dbReference type="NCBI Taxonomy" id="10090"/>
    <lineage>
        <taxon>Eukaryota</taxon>
        <taxon>Metazoa</taxon>
        <taxon>Chordata</taxon>
        <taxon>Craniata</taxon>
        <taxon>Vertebrata</taxon>
        <taxon>Euteleostomi</taxon>
        <taxon>Mammalia</taxon>
        <taxon>Eutheria</taxon>
        <taxon>Euarchontoglires</taxon>
        <taxon>Glires</taxon>
        <taxon>Rodentia</taxon>
        <taxon>Myomorpha</taxon>
        <taxon>Muroidea</taxon>
        <taxon>Muridae</taxon>
        <taxon>Murinae</taxon>
        <taxon>Mus</taxon>
        <taxon>Mus</taxon>
    </lineage>
</organism>
<dbReference type="EMBL" id="AK044337">
    <property type="protein sequence ID" value="BAC31874.1"/>
    <property type="molecule type" value="mRNA"/>
</dbReference>
<dbReference type="EMBL" id="AK142301">
    <property type="protein sequence ID" value="BAE25020.1"/>
    <property type="molecule type" value="mRNA"/>
</dbReference>
<dbReference type="EMBL" id="BC065056">
    <property type="protein sequence ID" value="AAH65056.1"/>
    <property type="molecule type" value="mRNA"/>
</dbReference>
<dbReference type="EMBL" id="BC094577">
    <property type="protein sequence ID" value="AAH94577.1"/>
    <property type="molecule type" value="mRNA"/>
</dbReference>
<dbReference type="CCDS" id="CCDS15375.1"/>
<dbReference type="RefSeq" id="NP_001344454.1">
    <property type="nucleotide sequence ID" value="NM_001357525.1"/>
</dbReference>
<dbReference type="RefSeq" id="NP_080656.2">
    <property type="nucleotide sequence ID" value="NM_026380.3"/>
</dbReference>
<dbReference type="RefSeq" id="XP_006529881.1">
    <property type="nucleotide sequence ID" value="XM_006529818.5"/>
</dbReference>
<dbReference type="RefSeq" id="XP_006529882.1">
    <property type="nucleotide sequence ID" value="XM_006529819.3"/>
</dbReference>
<dbReference type="RefSeq" id="XP_006529883.1">
    <property type="nucleotide sequence ID" value="XM_006529820.5"/>
</dbReference>
<dbReference type="RefSeq" id="XP_006529884.1">
    <property type="nucleotide sequence ID" value="XM_006529821.3"/>
</dbReference>
<dbReference type="RefSeq" id="XP_030098365.1">
    <property type="nucleotide sequence ID" value="XM_030242505.1"/>
</dbReference>
<dbReference type="RefSeq" id="XP_030098367.1">
    <property type="nucleotide sequence ID" value="XM_030242507.2"/>
</dbReference>
<dbReference type="RefSeq" id="XP_036009076.1">
    <property type="nucleotide sequence ID" value="XM_036153183.1"/>
</dbReference>
<dbReference type="SMR" id="Q8BXT1"/>
<dbReference type="BioGRID" id="212446">
    <property type="interactions" value="2"/>
</dbReference>
<dbReference type="FunCoup" id="Q8BXT1">
    <property type="interactions" value="151"/>
</dbReference>
<dbReference type="STRING" id="10090.ENSMUSP00000045715"/>
<dbReference type="iPTMnet" id="Q8BXT1"/>
<dbReference type="PhosphoSitePlus" id="Q8BXT1"/>
<dbReference type="SwissPalm" id="Q8BXT1"/>
<dbReference type="PaxDb" id="10090-ENSMUSP00000045715"/>
<dbReference type="ProteomicsDB" id="255195"/>
<dbReference type="Antibodypedia" id="34440">
    <property type="antibodies" value="126 antibodies from 20 providers"/>
</dbReference>
<dbReference type="DNASU" id="67792"/>
<dbReference type="Ensembl" id="ENSMUST00000041776.12">
    <property type="protein sequence ID" value="ENSMUSP00000045715.6"/>
    <property type="gene ID" value="ENSMUSG00000042671.13"/>
</dbReference>
<dbReference type="Ensembl" id="ENSMUST00000111810.2">
    <property type="protein sequence ID" value="ENSMUSP00000107441.2"/>
    <property type="gene ID" value="ENSMUSG00000042671.13"/>
</dbReference>
<dbReference type="Ensembl" id="ENSMUST00000111812.8">
    <property type="protein sequence ID" value="ENSMUSP00000107443.2"/>
    <property type="gene ID" value="ENSMUSG00000042671.13"/>
</dbReference>
<dbReference type="GeneID" id="67792"/>
<dbReference type="KEGG" id="mmu:67792"/>
<dbReference type="UCSC" id="uc007dad.1">
    <property type="organism name" value="mouse"/>
</dbReference>
<dbReference type="AGR" id="MGI:108408"/>
<dbReference type="CTD" id="85397"/>
<dbReference type="MGI" id="MGI:108408">
    <property type="gene designation" value="Rgs8"/>
</dbReference>
<dbReference type="VEuPathDB" id="HostDB:ENSMUSG00000042671"/>
<dbReference type="eggNOG" id="KOG3589">
    <property type="taxonomic scope" value="Eukaryota"/>
</dbReference>
<dbReference type="GeneTree" id="ENSGT00940000154304"/>
<dbReference type="HOGENOM" id="CLU_059863_3_1_1"/>
<dbReference type="InParanoid" id="Q8BXT1"/>
<dbReference type="OMA" id="MHQSTKL"/>
<dbReference type="OrthoDB" id="196547at2759"/>
<dbReference type="PhylomeDB" id="Q8BXT1"/>
<dbReference type="TreeFam" id="TF315837"/>
<dbReference type="Reactome" id="R-MMU-418594">
    <property type="pathway name" value="G alpha (i) signalling events"/>
</dbReference>
<dbReference type="BioGRID-ORCS" id="67792">
    <property type="hits" value="2 hits in 76 CRISPR screens"/>
</dbReference>
<dbReference type="CD-CODE" id="CE726F99">
    <property type="entry name" value="Postsynaptic density"/>
</dbReference>
<dbReference type="ChiTaRS" id="Rgs8">
    <property type="organism name" value="mouse"/>
</dbReference>
<dbReference type="PRO" id="PR:Q8BXT1"/>
<dbReference type="Proteomes" id="UP000000589">
    <property type="component" value="Chromosome 1"/>
</dbReference>
<dbReference type="RNAct" id="Q8BXT1">
    <property type="molecule type" value="protein"/>
</dbReference>
<dbReference type="Bgee" id="ENSMUSG00000042671">
    <property type="expression patterns" value="Expressed in cerebellum lobe and 89 other cell types or tissues"/>
</dbReference>
<dbReference type="ExpressionAtlas" id="Q8BXT1">
    <property type="expression patterns" value="baseline and differential"/>
</dbReference>
<dbReference type="GO" id="GO:0009898">
    <property type="term" value="C:cytoplasmic side of plasma membrane"/>
    <property type="evidence" value="ECO:0000250"/>
    <property type="project" value="UniProtKB"/>
</dbReference>
<dbReference type="GO" id="GO:0030425">
    <property type="term" value="C:dendrite"/>
    <property type="evidence" value="ECO:0000250"/>
    <property type="project" value="UniProtKB"/>
</dbReference>
<dbReference type="GO" id="GO:0032809">
    <property type="term" value="C:neuronal cell body membrane"/>
    <property type="evidence" value="ECO:0000250"/>
    <property type="project" value="UniProtKB"/>
</dbReference>
<dbReference type="GO" id="GO:0005634">
    <property type="term" value="C:nucleus"/>
    <property type="evidence" value="ECO:0000250"/>
    <property type="project" value="UniProtKB"/>
</dbReference>
<dbReference type="GO" id="GO:0043204">
    <property type="term" value="C:perikaryon"/>
    <property type="evidence" value="ECO:0007669"/>
    <property type="project" value="UniProtKB-SubCell"/>
</dbReference>
<dbReference type="GO" id="GO:0045202">
    <property type="term" value="C:synapse"/>
    <property type="evidence" value="ECO:0007669"/>
    <property type="project" value="GOC"/>
</dbReference>
<dbReference type="GO" id="GO:0005096">
    <property type="term" value="F:GTPase activator activity"/>
    <property type="evidence" value="ECO:0000250"/>
    <property type="project" value="UniProtKB"/>
</dbReference>
<dbReference type="GO" id="GO:0007213">
    <property type="term" value="P:G protein-coupled acetylcholine receptor signaling pathway"/>
    <property type="evidence" value="ECO:0000250"/>
    <property type="project" value="UniProtKB"/>
</dbReference>
<dbReference type="GO" id="GO:0007186">
    <property type="term" value="P:G protein-coupled receptor signaling pathway"/>
    <property type="evidence" value="ECO:0000304"/>
    <property type="project" value="MGI"/>
</dbReference>
<dbReference type="GO" id="GO:0009968">
    <property type="term" value="P:negative regulation of signal transduction"/>
    <property type="evidence" value="ECO:0007669"/>
    <property type="project" value="UniProtKB-KW"/>
</dbReference>
<dbReference type="GO" id="GO:0043547">
    <property type="term" value="P:positive regulation of GTPase activity"/>
    <property type="evidence" value="ECO:0000250"/>
    <property type="project" value="UniProtKB"/>
</dbReference>
<dbReference type="GO" id="GO:0060159">
    <property type="term" value="P:regulation of dopamine receptor signaling pathway"/>
    <property type="evidence" value="ECO:0000250"/>
    <property type="project" value="UniProtKB"/>
</dbReference>
<dbReference type="CDD" id="cd08711">
    <property type="entry name" value="RGS_RGS8"/>
    <property type="match status" value="1"/>
</dbReference>
<dbReference type="FunFam" id="1.10.167.10:FF:000001">
    <property type="entry name" value="Putative regulator of g-protein signaling 12"/>
    <property type="match status" value="1"/>
</dbReference>
<dbReference type="FunFam" id="1.10.196.10:FF:000001">
    <property type="entry name" value="Regulator of G-protein signaling 8"/>
    <property type="match status" value="1"/>
</dbReference>
<dbReference type="Gene3D" id="1.10.196.10">
    <property type="match status" value="2"/>
</dbReference>
<dbReference type="Gene3D" id="1.10.167.10">
    <property type="entry name" value="Regulator of G-protein Signalling 4, domain 2"/>
    <property type="match status" value="1"/>
</dbReference>
<dbReference type="InterPro" id="IPR016137">
    <property type="entry name" value="RGS"/>
</dbReference>
<dbReference type="InterPro" id="IPR034949">
    <property type="entry name" value="RGS_RGS8"/>
</dbReference>
<dbReference type="InterPro" id="IPR036305">
    <property type="entry name" value="RGS_sf"/>
</dbReference>
<dbReference type="InterPro" id="IPR024066">
    <property type="entry name" value="RGS_subdom1/3"/>
</dbReference>
<dbReference type="InterPro" id="IPR044926">
    <property type="entry name" value="RGS_subdomain_2"/>
</dbReference>
<dbReference type="PANTHER" id="PTHR10845">
    <property type="entry name" value="REGULATOR OF G PROTEIN SIGNALING"/>
    <property type="match status" value="1"/>
</dbReference>
<dbReference type="PANTHER" id="PTHR10845:SF147">
    <property type="entry name" value="REGULATOR OF G-PROTEIN SIGNALING 8"/>
    <property type="match status" value="1"/>
</dbReference>
<dbReference type="Pfam" id="PF00615">
    <property type="entry name" value="RGS"/>
    <property type="match status" value="1"/>
</dbReference>
<dbReference type="PRINTS" id="PR01301">
    <property type="entry name" value="RGSPROTEIN"/>
</dbReference>
<dbReference type="SMART" id="SM00315">
    <property type="entry name" value="RGS"/>
    <property type="match status" value="1"/>
</dbReference>
<dbReference type="SUPFAM" id="SSF48097">
    <property type="entry name" value="Regulator of G-protein signaling, RGS"/>
    <property type="match status" value="1"/>
</dbReference>
<dbReference type="PROSITE" id="PS50132">
    <property type="entry name" value="RGS"/>
    <property type="match status" value="1"/>
</dbReference>
<accession>Q8BXT1</accession>
<accession>Q505F2</accession>
<protein>
    <recommendedName>
        <fullName>Regulator of G-protein signaling 8</fullName>
        <shortName>RGS8</shortName>
    </recommendedName>
</protein>
<comment type="function">
    <text evidence="1">Regulates G protein-coupled receptor signaling cascades, including signaling via muscarinic acetylcholine receptor CHRM2 and dopamine receptor DRD2. Inhibits signal transduction by increasing the GTPase activity of G protein alpha subunits, thereby driving them into their inactive GDP-bound form. Modulates the activity of potassium channels that are activated in response to DRD2 and CHRM2 signaling.</text>
</comment>
<comment type="subunit">
    <text evidence="1">Interacts with GNAO1 and GNAI3.</text>
</comment>
<comment type="subcellular location">
    <subcellularLocation>
        <location evidence="1">Cell membrane</location>
        <topology evidence="1">Peripheral membrane protein</topology>
        <orientation evidence="1">Cytoplasmic side</orientation>
    </subcellularLocation>
    <subcellularLocation>
        <location evidence="1">Membrane</location>
        <topology evidence="1">Peripheral membrane protein</topology>
        <orientation evidence="1">Cytoplasmic side</orientation>
    </subcellularLocation>
    <subcellularLocation>
        <location evidence="1">Perikaryon</location>
    </subcellularLocation>
    <subcellularLocation>
        <location evidence="1">Cell projection</location>
        <location evidence="1">Dendrite</location>
    </subcellularLocation>
    <subcellularLocation>
        <location evidence="1">Nucleus</location>
    </subcellularLocation>
    <text evidence="1">Detected in Purkinje cell soma and dendrites. Associated with Purkinje cell membranes. Not detected in Purkinje cell nuclei. Detected in the nucleus after heterologous expression. Recruited to the cell membrane in the presence of GNAO1.</text>
</comment>
<keyword id="KW-1003">Cell membrane</keyword>
<keyword id="KW-0966">Cell projection</keyword>
<keyword id="KW-0343">GTPase activation</keyword>
<keyword id="KW-0472">Membrane</keyword>
<keyword id="KW-0539">Nucleus</keyword>
<keyword id="KW-0597">Phosphoprotein</keyword>
<keyword id="KW-1185">Reference proteome</keyword>
<keyword id="KW-0734">Signal transduction inhibitor</keyword>
<reference key="1">
    <citation type="journal article" date="2005" name="Science">
        <title>The transcriptional landscape of the mammalian genome.</title>
        <authorList>
            <person name="Carninci P."/>
            <person name="Kasukawa T."/>
            <person name="Katayama S."/>
            <person name="Gough J."/>
            <person name="Frith M.C."/>
            <person name="Maeda N."/>
            <person name="Oyama R."/>
            <person name="Ravasi T."/>
            <person name="Lenhard B."/>
            <person name="Wells C."/>
            <person name="Kodzius R."/>
            <person name="Shimokawa K."/>
            <person name="Bajic V.B."/>
            <person name="Brenner S.E."/>
            <person name="Batalov S."/>
            <person name="Forrest A.R."/>
            <person name="Zavolan M."/>
            <person name="Davis M.J."/>
            <person name="Wilming L.G."/>
            <person name="Aidinis V."/>
            <person name="Allen J.E."/>
            <person name="Ambesi-Impiombato A."/>
            <person name="Apweiler R."/>
            <person name="Aturaliya R.N."/>
            <person name="Bailey T.L."/>
            <person name="Bansal M."/>
            <person name="Baxter L."/>
            <person name="Beisel K.W."/>
            <person name="Bersano T."/>
            <person name="Bono H."/>
            <person name="Chalk A.M."/>
            <person name="Chiu K.P."/>
            <person name="Choudhary V."/>
            <person name="Christoffels A."/>
            <person name="Clutterbuck D.R."/>
            <person name="Crowe M.L."/>
            <person name="Dalla E."/>
            <person name="Dalrymple B.P."/>
            <person name="de Bono B."/>
            <person name="Della Gatta G."/>
            <person name="di Bernardo D."/>
            <person name="Down T."/>
            <person name="Engstrom P."/>
            <person name="Fagiolini M."/>
            <person name="Faulkner G."/>
            <person name="Fletcher C.F."/>
            <person name="Fukushima T."/>
            <person name="Furuno M."/>
            <person name="Futaki S."/>
            <person name="Gariboldi M."/>
            <person name="Georgii-Hemming P."/>
            <person name="Gingeras T.R."/>
            <person name="Gojobori T."/>
            <person name="Green R.E."/>
            <person name="Gustincich S."/>
            <person name="Harbers M."/>
            <person name="Hayashi Y."/>
            <person name="Hensch T.K."/>
            <person name="Hirokawa N."/>
            <person name="Hill D."/>
            <person name="Huminiecki L."/>
            <person name="Iacono M."/>
            <person name="Ikeo K."/>
            <person name="Iwama A."/>
            <person name="Ishikawa T."/>
            <person name="Jakt M."/>
            <person name="Kanapin A."/>
            <person name="Katoh M."/>
            <person name="Kawasawa Y."/>
            <person name="Kelso J."/>
            <person name="Kitamura H."/>
            <person name="Kitano H."/>
            <person name="Kollias G."/>
            <person name="Krishnan S.P."/>
            <person name="Kruger A."/>
            <person name="Kummerfeld S.K."/>
            <person name="Kurochkin I.V."/>
            <person name="Lareau L.F."/>
            <person name="Lazarevic D."/>
            <person name="Lipovich L."/>
            <person name="Liu J."/>
            <person name="Liuni S."/>
            <person name="McWilliam S."/>
            <person name="Madan Babu M."/>
            <person name="Madera M."/>
            <person name="Marchionni L."/>
            <person name="Matsuda H."/>
            <person name="Matsuzawa S."/>
            <person name="Miki H."/>
            <person name="Mignone F."/>
            <person name="Miyake S."/>
            <person name="Morris K."/>
            <person name="Mottagui-Tabar S."/>
            <person name="Mulder N."/>
            <person name="Nakano N."/>
            <person name="Nakauchi H."/>
            <person name="Ng P."/>
            <person name="Nilsson R."/>
            <person name="Nishiguchi S."/>
            <person name="Nishikawa S."/>
            <person name="Nori F."/>
            <person name="Ohara O."/>
            <person name="Okazaki Y."/>
            <person name="Orlando V."/>
            <person name="Pang K.C."/>
            <person name="Pavan W.J."/>
            <person name="Pavesi G."/>
            <person name="Pesole G."/>
            <person name="Petrovsky N."/>
            <person name="Piazza S."/>
            <person name="Reed J."/>
            <person name="Reid J.F."/>
            <person name="Ring B.Z."/>
            <person name="Ringwald M."/>
            <person name="Rost B."/>
            <person name="Ruan Y."/>
            <person name="Salzberg S.L."/>
            <person name="Sandelin A."/>
            <person name="Schneider C."/>
            <person name="Schoenbach C."/>
            <person name="Sekiguchi K."/>
            <person name="Semple C.A."/>
            <person name="Seno S."/>
            <person name="Sessa L."/>
            <person name="Sheng Y."/>
            <person name="Shibata Y."/>
            <person name="Shimada H."/>
            <person name="Shimada K."/>
            <person name="Silva D."/>
            <person name="Sinclair B."/>
            <person name="Sperling S."/>
            <person name="Stupka E."/>
            <person name="Sugiura K."/>
            <person name="Sultana R."/>
            <person name="Takenaka Y."/>
            <person name="Taki K."/>
            <person name="Tammoja K."/>
            <person name="Tan S.L."/>
            <person name="Tang S."/>
            <person name="Taylor M.S."/>
            <person name="Tegner J."/>
            <person name="Teichmann S.A."/>
            <person name="Ueda H.R."/>
            <person name="van Nimwegen E."/>
            <person name="Verardo R."/>
            <person name="Wei C.L."/>
            <person name="Yagi K."/>
            <person name="Yamanishi H."/>
            <person name="Zabarovsky E."/>
            <person name="Zhu S."/>
            <person name="Zimmer A."/>
            <person name="Hide W."/>
            <person name="Bult C."/>
            <person name="Grimmond S.M."/>
            <person name="Teasdale R.D."/>
            <person name="Liu E.T."/>
            <person name="Brusic V."/>
            <person name="Quackenbush J."/>
            <person name="Wahlestedt C."/>
            <person name="Mattick J.S."/>
            <person name="Hume D.A."/>
            <person name="Kai C."/>
            <person name="Sasaki D."/>
            <person name="Tomaru Y."/>
            <person name="Fukuda S."/>
            <person name="Kanamori-Katayama M."/>
            <person name="Suzuki M."/>
            <person name="Aoki J."/>
            <person name="Arakawa T."/>
            <person name="Iida J."/>
            <person name="Imamura K."/>
            <person name="Itoh M."/>
            <person name="Kato T."/>
            <person name="Kawaji H."/>
            <person name="Kawagashira N."/>
            <person name="Kawashima T."/>
            <person name="Kojima M."/>
            <person name="Kondo S."/>
            <person name="Konno H."/>
            <person name="Nakano K."/>
            <person name="Ninomiya N."/>
            <person name="Nishio T."/>
            <person name="Okada M."/>
            <person name="Plessy C."/>
            <person name="Shibata K."/>
            <person name="Shiraki T."/>
            <person name="Suzuki S."/>
            <person name="Tagami M."/>
            <person name="Waki K."/>
            <person name="Watahiki A."/>
            <person name="Okamura-Oho Y."/>
            <person name="Suzuki H."/>
            <person name="Kawai J."/>
            <person name="Hayashizaki Y."/>
        </authorList>
    </citation>
    <scope>NUCLEOTIDE SEQUENCE [LARGE SCALE MRNA]</scope>
    <source>
        <strain>C57BL/6J</strain>
        <tissue>Heart</tissue>
        <tissue>Retina</tissue>
    </source>
</reference>
<reference key="2">
    <citation type="journal article" date="2004" name="Genome Res.">
        <title>The status, quality, and expansion of the NIH full-length cDNA project: the Mammalian Gene Collection (MGC).</title>
        <authorList>
            <consortium name="The MGC Project Team"/>
        </authorList>
    </citation>
    <scope>NUCLEOTIDE SEQUENCE [LARGE SCALE MRNA]</scope>
    <source>
        <strain>C57BL/6J</strain>
        <tissue>Brain</tissue>
    </source>
</reference>
<reference key="3">
    <citation type="journal article" date="2010" name="Cell">
        <title>A tissue-specific atlas of mouse protein phosphorylation and expression.</title>
        <authorList>
            <person name="Huttlin E.L."/>
            <person name="Jedrychowski M.P."/>
            <person name="Elias J.E."/>
            <person name="Goswami T."/>
            <person name="Rad R."/>
            <person name="Beausoleil S.A."/>
            <person name="Villen J."/>
            <person name="Haas W."/>
            <person name="Sowa M.E."/>
            <person name="Gygi S.P."/>
        </authorList>
    </citation>
    <scope>IDENTIFICATION BY MASS SPECTROMETRY [LARGE SCALE ANALYSIS]</scope>
    <source>
        <tissue>Brain</tissue>
    </source>
</reference>
<sequence>MAALLMPRRNKGMRTRLGCLSHKSDSCSDFTAILPDKPNRALKRLSTEEATRWAESFDVLLSHKYGVAAFRAFLKTEFSEENLEFWLACEEFKKTRSTAKLVTKAHRIFEEFVDVQAPREVNIDFQTREATRKNMQEPSLTCFDQAQGKVHSLMEKDSYPRFLRSKMYLDLLSQSQRRLS</sequence>